<organism>
    <name type="scientific">Gallus gallus</name>
    <name type="common">Chicken</name>
    <dbReference type="NCBI Taxonomy" id="9031"/>
    <lineage>
        <taxon>Eukaryota</taxon>
        <taxon>Metazoa</taxon>
        <taxon>Chordata</taxon>
        <taxon>Craniata</taxon>
        <taxon>Vertebrata</taxon>
        <taxon>Euteleostomi</taxon>
        <taxon>Archelosauria</taxon>
        <taxon>Archosauria</taxon>
        <taxon>Dinosauria</taxon>
        <taxon>Saurischia</taxon>
        <taxon>Theropoda</taxon>
        <taxon>Coelurosauria</taxon>
        <taxon>Aves</taxon>
        <taxon>Neognathae</taxon>
        <taxon>Galloanserae</taxon>
        <taxon>Galliformes</taxon>
        <taxon>Phasianidae</taxon>
        <taxon>Phasianinae</taxon>
        <taxon>Gallus</taxon>
    </lineage>
</organism>
<protein>
    <recommendedName>
        <fullName>Spindlin-W</fullName>
        <shortName>chSpin-W</shortName>
    </recommendedName>
</protein>
<reference key="1">
    <citation type="journal article" date="2001" name="Chromosome Res.">
        <title>Chicken spindlin genes on W and Z chromosomes: transcriptional expression of both genes and dynamic behavior of spindlin in interphase and mitotic cells.</title>
        <authorList>
            <person name="Itoh Y."/>
            <person name="Hori T."/>
            <person name="Saitoh H."/>
            <person name="Mizuno S."/>
        </authorList>
    </citation>
    <scope>NUCLEOTIDE SEQUENCE [MRNA]</scope>
    <scope>FUNCTION</scope>
    <scope>SUBCELLULAR LOCATION</scope>
    <scope>TISSUE SPECIFICITY</scope>
    <scope>DEVELOPMENTAL STAGE</scope>
    <source>
        <tissue>Ovary</tissue>
    </source>
</reference>
<accession>Q90WG2</accession>
<sequence length="262" mass="29781">MKTPFGKSPAQRSRADAGHTRVSASMMKKRTSHKKHRNNVGPSKPISQPRRNIVGCRIQHGWKEGSGPITQWKGTVLDQVPVNPSLYLIKYDGFDCVYGLELHKDERVSALEVLPDRVASSRISDAHLADTMIGKAVEHMFETEDGSKDEWRGMVLARAPIMNTWFYITYEKDPVLYMYQLLDDYKEGDLRIMPDSNDSPPAEREPGEVVDSLVGKQVEYAKEDGSKRTGMVIHQVEAKPSVYFIKFDDDFHIYVYDLVKTS</sequence>
<comment type="function">
    <text evidence="2">May play a role in mitosis.</text>
</comment>
<comment type="subcellular location">
    <subcellularLocation>
        <location evidence="2">Nucleus</location>
    </subcellularLocation>
</comment>
<comment type="tissue specificity">
    <text evidence="2">Expressed predominantly in ovarian granulosa and thecal cell.</text>
</comment>
<comment type="developmental stage">
    <text evidence="2">Expressed in early embryo.</text>
</comment>
<comment type="similarity">
    <text evidence="3">Belongs to the SPIN/STSY family.</text>
</comment>
<gene>
    <name type="primary">SPINW</name>
</gene>
<proteinExistence type="evidence at transcript level"/>
<feature type="chain" id="PRO_0000259593" description="Spindlin-W">
    <location>
        <begin position="1"/>
        <end position="262"/>
    </location>
</feature>
<feature type="region of interest" description="Disordered" evidence="1">
    <location>
        <begin position="1"/>
        <end position="49"/>
    </location>
</feature>
<feature type="compositionally biased region" description="Basic residues" evidence="1">
    <location>
        <begin position="27"/>
        <end position="38"/>
    </location>
</feature>
<dbReference type="EMBL" id="AB047852">
    <property type="protein sequence ID" value="BAB59129.1"/>
    <property type="molecule type" value="mRNA"/>
</dbReference>
<dbReference type="RefSeq" id="NP_989522.1">
    <property type="nucleotide sequence ID" value="NM_204191.1"/>
</dbReference>
<dbReference type="RefSeq" id="XP_015155935.1">
    <property type="nucleotide sequence ID" value="XM_015300449.1"/>
</dbReference>
<dbReference type="SMR" id="Q90WG2"/>
<dbReference type="FunCoup" id="Q90WG2">
    <property type="interactions" value="968"/>
</dbReference>
<dbReference type="STRING" id="9031.ENSGALP00000048979"/>
<dbReference type="Ensembl" id="ENSGALT00010030648.1">
    <property type="protein sequence ID" value="ENSGALP00010017770.1"/>
    <property type="gene ID" value="ENSGALG00010012781.1"/>
</dbReference>
<dbReference type="GeneID" id="374014"/>
<dbReference type="KEGG" id="gga:374014"/>
<dbReference type="CTD" id="374014"/>
<dbReference type="VEuPathDB" id="HostDB:geneid_374014"/>
<dbReference type="GeneTree" id="ENSGT00950000182925"/>
<dbReference type="InParanoid" id="Q90WG2"/>
<dbReference type="OrthoDB" id="9944558at2759"/>
<dbReference type="PRO" id="PR:Q90WG2"/>
<dbReference type="Proteomes" id="UP000000539">
    <property type="component" value="Chromosome W"/>
</dbReference>
<dbReference type="Bgee" id="ENSGALG00000040704">
    <property type="expression patterns" value="Expressed in ovary and 8 other cell types or tissues"/>
</dbReference>
<dbReference type="GO" id="GO:0005730">
    <property type="term" value="C:nucleolus"/>
    <property type="evidence" value="ECO:0000314"/>
    <property type="project" value="AgBase"/>
</dbReference>
<dbReference type="GO" id="GO:0016605">
    <property type="term" value="C:PML body"/>
    <property type="evidence" value="ECO:0000314"/>
    <property type="project" value="AgBase"/>
</dbReference>
<dbReference type="GO" id="GO:0007276">
    <property type="term" value="P:gamete generation"/>
    <property type="evidence" value="ECO:0007669"/>
    <property type="project" value="InterPro"/>
</dbReference>
<dbReference type="FunFam" id="2.80.10.70:FF:000001">
    <property type="entry name" value="Spindlin 1"/>
    <property type="match status" value="1"/>
</dbReference>
<dbReference type="Gene3D" id="2.80.10.70">
    <property type="entry name" value="Spindlin/Ssty"/>
    <property type="match status" value="1"/>
</dbReference>
<dbReference type="InterPro" id="IPR003671">
    <property type="entry name" value="SPIN/Ssty"/>
</dbReference>
<dbReference type="InterPro" id="IPR042567">
    <property type="entry name" value="SPIN/Ssty_sf"/>
</dbReference>
<dbReference type="PANTHER" id="PTHR10405">
    <property type="entry name" value="SPINDLIN"/>
    <property type="match status" value="1"/>
</dbReference>
<dbReference type="Pfam" id="PF02513">
    <property type="entry name" value="Spin-Ssty"/>
    <property type="match status" value="3"/>
</dbReference>
<name>SPINW_CHICK</name>
<evidence type="ECO:0000256" key="1">
    <source>
        <dbReference type="SAM" id="MobiDB-lite"/>
    </source>
</evidence>
<evidence type="ECO:0000269" key="2">
    <source>
    </source>
</evidence>
<evidence type="ECO:0000305" key="3"/>
<keyword id="KW-0131">Cell cycle</keyword>
<keyword id="KW-0539">Nucleus</keyword>
<keyword id="KW-1185">Reference proteome</keyword>